<dbReference type="EC" id="2.5.1.145" evidence="1"/>
<dbReference type="EMBL" id="AP009256">
    <property type="protein sequence ID" value="BAF39573.1"/>
    <property type="molecule type" value="Genomic_DNA"/>
</dbReference>
<dbReference type="RefSeq" id="WP_011743173.1">
    <property type="nucleotide sequence ID" value="NC_008618.1"/>
</dbReference>
<dbReference type="SMR" id="A1A1J0"/>
<dbReference type="STRING" id="367928.BAD_0792"/>
<dbReference type="PaxDb" id="1680-BADO_0841"/>
<dbReference type="GeneID" id="4556288"/>
<dbReference type="KEGG" id="bad:BAD_0792"/>
<dbReference type="HOGENOM" id="CLU_013386_2_0_11"/>
<dbReference type="UniPathway" id="UPA00664"/>
<dbReference type="Proteomes" id="UP000008702">
    <property type="component" value="Chromosome"/>
</dbReference>
<dbReference type="GO" id="GO:0005886">
    <property type="term" value="C:plasma membrane"/>
    <property type="evidence" value="ECO:0007669"/>
    <property type="project" value="UniProtKB-SubCell"/>
</dbReference>
<dbReference type="GO" id="GO:0008961">
    <property type="term" value="F:phosphatidylglycerol-prolipoprotein diacylglyceryl transferase activity"/>
    <property type="evidence" value="ECO:0007669"/>
    <property type="project" value="UniProtKB-UniRule"/>
</dbReference>
<dbReference type="GO" id="GO:0042158">
    <property type="term" value="P:lipoprotein biosynthetic process"/>
    <property type="evidence" value="ECO:0007669"/>
    <property type="project" value="UniProtKB-UniRule"/>
</dbReference>
<dbReference type="HAMAP" id="MF_01147">
    <property type="entry name" value="Lgt"/>
    <property type="match status" value="1"/>
</dbReference>
<dbReference type="InterPro" id="IPR001640">
    <property type="entry name" value="Lgt"/>
</dbReference>
<dbReference type="NCBIfam" id="TIGR00544">
    <property type="entry name" value="lgt"/>
    <property type="match status" value="1"/>
</dbReference>
<dbReference type="PANTHER" id="PTHR30589:SF0">
    <property type="entry name" value="PHOSPHATIDYLGLYCEROL--PROLIPOPROTEIN DIACYLGLYCERYL TRANSFERASE"/>
    <property type="match status" value="1"/>
</dbReference>
<dbReference type="PANTHER" id="PTHR30589">
    <property type="entry name" value="PROLIPOPROTEIN DIACYLGLYCERYL TRANSFERASE"/>
    <property type="match status" value="1"/>
</dbReference>
<dbReference type="Pfam" id="PF01790">
    <property type="entry name" value="LGT"/>
    <property type="match status" value="1"/>
</dbReference>
<dbReference type="PROSITE" id="PS01311">
    <property type="entry name" value="LGT"/>
    <property type="match status" value="1"/>
</dbReference>
<feature type="chain" id="PRO_1000137403" description="Phosphatidylglycerol--prolipoprotein diacylglyceryl transferase">
    <location>
        <begin position="1"/>
        <end position="336"/>
    </location>
</feature>
<feature type="transmembrane region" description="Helical" evidence="1">
    <location>
        <begin position="16"/>
        <end position="36"/>
    </location>
</feature>
<feature type="transmembrane region" description="Helical" evidence="1">
    <location>
        <begin position="53"/>
        <end position="73"/>
    </location>
</feature>
<feature type="transmembrane region" description="Helical" evidence="1">
    <location>
        <begin position="93"/>
        <end position="113"/>
    </location>
</feature>
<feature type="transmembrane region" description="Helical" evidence="1">
    <location>
        <begin position="190"/>
        <end position="210"/>
    </location>
</feature>
<feature type="transmembrane region" description="Helical" evidence="1">
    <location>
        <begin position="220"/>
        <end position="240"/>
    </location>
</feature>
<feature type="transmembrane region" description="Helical" evidence="1">
    <location>
        <begin position="253"/>
        <end position="273"/>
    </location>
</feature>
<feature type="binding site" evidence="1">
    <location>
        <position position="141"/>
    </location>
    <ligand>
        <name>a 1,2-diacyl-sn-glycero-3-phospho-(1'-sn-glycerol)</name>
        <dbReference type="ChEBI" id="CHEBI:64716"/>
    </ligand>
</feature>
<evidence type="ECO:0000255" key="1">
    <source>
        <dbReference type="HAMAP-Rule" id="MF_01147"/>
    </source>
</evidence>
<name>LGT_BIFAA</name>
<comment type="function">
    <text evidence="1">Catalyzes the transfer of the diacylglyceryl group from phosphatidylglycerol to the sulfhydryl group of the N-terminal cysteine of a prolipoprotein, the first step in the formation of mature lipoproteins.</text>
</comment>
<comment type="catalytic activity">
    <reaction evidence="1">
        <text>L-cysteinyl-[prolipoprotein] + a 1,2-diacyl-sn-glycero-3-phospho-(1'-sn-glycerol) = an S-1,2-diacyl-sn-glyceryl-L-cysteinyl-[prolipoprotein] + sn-glycerol 1-phosphate + H(+)</text>
        <dbReference type="Rhea" id="RHEA:56712"/>
        <dbReference type="Rhea" id="RHEA-COMP:14679"/>
        <dbReference type="Rhea" id="RHEA-COMP:14680"/>
        <dbReference type="ChEBI" id="CHEBI:15378"/>
        <dbReference type="ChEBI" id="CHEBI:29950"/>
        <dbReference type="ChEBI" id="CHEBI:57685"/>
        <dbReference type="ChEBI" id="CHEBI:64716"/>
        <dbReference type="ChEBI" id="CHEBI:140658"/>
        <dbReference type="EC" id="2.5.1.145"/>
    </reaction>
</comment>
<comment type="pathway">
    <text evidence="1">Protein modification; lipoprotein biosynthesis (diacylglyceryl transfer).</text>
</comment>
<comment type="subcellular location">
    <subcellularLocation>
        <location evidence="1">Cell membrane</location>
        <topology evidence="1">Multi-pass membrane protein</topology>
    </subcellularLocation>
</comment>
<comment type="similarity">
    <text evidence="1">Belongs to the Lgt family.</text>
</comment>
<gene>
    <name evidence="1" type="primary">lgt</name>
    <name type="ordered locus">BAD_0792</name>
</gene>
<keyword id="KW-1003">Cell membrane</keyword>
<keyword id="KW-0472">Membrane</keyword>
<keyword id="KW-1185">Reference proteome</keyword>
<keyword id="KW-0808">Transferase</keyword>
<keyword id="KW-0812">Transmembrane</keyword>
<keyword id="KW-1133">Transmembrane helix</keyword>
<organism>
    <name type="scientific">Bifidobacterium adolescentis (strain ATCC 15703 / DSM 20083 / NCTC 11814 / E194a)</name>
    <dbReference type="NCBI Taxonomy" id="367928"/>
    <lineage>
        <taxon>Bacteria</taxon>
        <taxon>Bacillati</taxon>
        <taxon>Actinomycetota</taxon>
        <taxon>Actinomycetes</taxon>
        <taxon>Bifidobacteriales</taxon>
        <taxon>Bifidobacteriaceae</taxon>
        <taxon>Bifidobacterium</taxon>
    </lineage>
</organism>
<reference key="1">
    <citation type="submission" date="2006-12" db="EMBL/GenBank/DDBJ databases">
        <title>Bifidobacterium adolescentis complete genome sequence.</title>
        <authorList>
            <person name="Suzuki T."/>
            <person name="Tsuda Y."/>
            <person name="Kanou N."/>
            <person name="Inoue T."/>
            <person name="Kumazaki K."/>
            <person name="Nagano S."/>
            <person name="Hirai S."/>
            <person name="Tanaka K."/>
            <person name="Watanabe K."/>
        </authorList>
    </citation>
    <scope>NUCLEOTIDE SEQUENCE [LARGE SCALE GENOMIC DNA]</scope>
    <source>
        <strain>ATCC 15703 / DSM 20083 / NCTC 11814 / E194a</strain>
    </source>
</reference>
<sequence length="336" mass="36991">MTLAYIPSPTISQFSIGPVTIHFYALCILLGIVLAVWMTTVHWKRYGGNFDQILDITLVAVPSGIIGARIYHIITTPERFFGPTGDWVEMFRIWNGGLGIWGGVLLGALAAWAWCRHKHYPMALLGDAVAPGLLVAQAVGRLGNWFNQELYGAPTTLPWGLKLNMEGSAIGHSEQCYDGATCPTGTLFHPTFLYEMIWNLIGAALIVFLGSKIMKKLKAGSLFAIYIMWYTVGRTWIEALRIDFAHEFLGVRINVWVSMAVFVLGVVAFIVIQQMGKSTELLAEKLRTVTEIELSLVEDGETGLPTAKANLTKTKDEITANDGSSVSYADDQSDNK</sequence>
<protein>
    <recommendedName>
        <fullName evidence="1">Phosphatidylglycerol--prolipoprotein diacylglyceryl transferase</fullName>
        <ecNumber evidence="1">2.5.1.145</ecNumber>
    </recommendedName>
</protein>
<accession>A1A1J0</accession>
<proteinExistence type="inferred from homology"/>